<dbReference type="EMBL" id="CT863714">
    <property type="protein sequence ID" value="CAN88106.1"/>
    <property type="molecule type" value="Genomic_DNA"/>
</dbReference>
<dbReference type="EMBL" id="CT954222">
    <property type="protein sequence ID" value="CAN88106.1"/>
    <property type="status" value="JOINED"/>
    <property type="molecule type" value="Genomic_DNA"/>
</dbReference>
<dbReference type="EMBL" id="CT954222">
    <property type="protein sequence ID" value="CAN88279.1"/>
    <property type="molecule type" value="Genomic_DNA"/>
</dbReference>
<dbReference type="EMBL" id="CT863714">
    <property type="protein sequence ID" value="CAN88279.1"/>
    <property type="status" value="JOINED"/>
    <property type="molecule type" value="Genomic_DNA"/>
</dbReference>
<dbReference type="EMBL" id="BC095837">
    <property type="protein sequence ID" value="AAH95837.1"/>
    <property type="status" value="ALT_INIT"/>
    <property type="molecule type" value="mRNA"/>
</dbReference>
<dbReference type="EMBL" id="BC116506">
    <property type="protein sequence ID" value="AAI16507.1"/>
    <property type="status" value="ALT_INIT"/>
    <property type="molecule type" value="mRNA"/>
</dbReference>
<dbReference type="EMBL" id="BC117614">
    <property type="protein sequence ID" value="AAI17615.1"/>
    <property type="status" value="ALT_INIT"/>
    <property type="molecule type" value="mRNA"/>
</dbReference>
<dbReference type="RefSeq" id="NP_001186664.1">
    <property type="nucleotide sequence ID" value="NM_001199735.1"/>
</dbReference>
<dbReference type="SMR" id="A5WWB6"/>
<dbReference type="FunCoup" id="A5WWB6">
    <property type="interactions" value="1240"/>
</dbReference>
<dbReference type="STRING" id="7955.ENSDARP00000074147"/>
<dbReference type="PaxDb" id="7955-ENSDARP00000074147"/>
<dbReference type="PeptideAtlas" id="A5WWB6"/>
<dbReference type="Ensembl" id="ENSDART00000079695">
    <property type="protein sequence ID" value="ENSDARP00000074147"/>
    <property type="gene ID" value="ENSDARG00000057100"/>
</dbReference>
<dbReference type="GeneID" id="336439"/>
<dbReference type="KEGG" id="dre:336439"/>
<dbReference type="AGR" id="ZFIN:ZDB-GENE-050420-101"/>
<dbReference type="CTD" id="55055"/>
<dbReference type="ZFIN" id="ZDB-GENE-050420-101">
    <property type="gene designation" value="zwilch"/>
</dbReference>
<dbReference type="eggNOG" id="KOG4803">
    <property type="taxonomic scope" value="Eukaryota"/>
</dbReference>
<dbReference type="HOGENOM" id="CLU_466141_0_0_1"/>
<dbReference type="InParanoid" id="A5WWB6"/>
<dbReference type="OMA" id="PARTTWF"/>
<dbReference type="OrthoDB" id="5556307at2759"/>
<dbReference type="PhylomeDB" id="A5WWB6"/>
<dbReference type="TreeFam" id="TF324453"/>
<dbReference type="PRO" id="PR:A5WWB6"/>
<dbReference type="Proteomes" id="UP000000437">
    <property type="component" value="Chromosome 18"/>
</dbReference>
<dbReference type="Bgee" id="ENSDARG00000057100">
    <property type="expression patterns" value="Expressed in testis and 27 other cell types or tissues"/>
</dbReference>
<dbReference type="GO" id="GO:1990423">
    <property type="term" value="C:RZZ complex"/>
    <property type="evidence" value="ECO:0000318"/>
    <property type="project" value="GO_Central"/>
</dbReference>
<dbReference type="GO" id="GO:0051301">
    <property type="term" value="P:cell division"/>
    <property type="evidence" value="ECO:0007669"/>
    <property type="project" value="UniProtKB-KW"/>
</dbReference>
<dbReference type="GO" id="GO:0007094">
    <property type="term" value="P:mitotic spindle assembly checkpoint signaling"/>
    <property type="evidence" value="ECO:0000250"/>
    <property type="project" value="UniProtKB"/>
</dbReference>
<dbReference type="GO" id="GO:0034501">
    <property type="term" value="P:protein localization to kinetochore"/>
    <property type="evidence" value="ECO:0000318"/>
    <property type="project" value="GO_Central"/>
</dbReference>
<dbReference type="Gene3D" id="1.10.287.1880">
    <property type="match status" value="1"/>
</dbReference>
<dbReference type="Gene3D" id="1.20.58.730">
    <property type="match status" value="1"/>
</dbReference>
<dbReference type="Gene3D" id="2.20.25.230">
    <property type="match status" value="1"/>
</dbReference>
<dbReference type="Gene3D" id="6.10.140.520">
    <property type="match status" value="1"/>
</dbReference>
<dbReference type="Gene3D" id="6.20.270.10">
    <property type="match status" value="1"/>
</dbReference>
<dbReference type="InterPro" id="IPR018630">
    <property type="entry name" value="Zwilch"/>
</dbReference>
<dbReference type="PANTHER" id="PTHR15995">
    <property type="entry name" value="PROTEIN ZWILCH HOMOLOG"/>
    <property type="match status" value="1"/>
</dbReference>
<dbReference type="PANTHER" id="PTHR15995:SF1">
    <property type="entry name" value="PROTEIN ZWILCH HOMOLOG"/>
    <property type="match status" value="1"/>
</dbReference>
<dbReference type="Pfam" id="PF09817">
    <property type="entry name" value="Zwilch"/>
    <property type="match status" value="1"/>
</dbReference>
<name>ZWILC_DANRE</name>
<evidence type="ECO:0000250" key="1"/>
<evidence type="ECO:0000305" key="2"/>
<protein>
    <recommendedName>
        <fullName>Protein zwilch homolog</fullName>
    </recommendedName>
</protein>
<proteinExistence type="evidence at transcript level"/>
<gene>
    <name type="primary">zwilch</name>
    <name type="ORF">si:ch211-242m18.4</name>
    <name type="ORF">si:ch73-94f11.1</name>
</gene>
<reference key="1">
    <citation type="journal article" date="2013" name="Nature">
        <title>The zebrafish reference genome sequence and its relationship to the human genome.</title>
        <authorList>
            <person name="Howe K."/>
            <person name="Clark M.D."/>
            <person name="Torroja C.F."/>
            <person name="Torrance J."/>
            <person name="Berthelot C."/>
            <person name="Muffato M."/>
            <person name="Collins J.E."/>
            <person name="Humphray S."/>
            <person name="McLaren K."/>
            <person name="Matthews L."/>
            <person name="McLaren S."/>
            <person name="Sealy I."/>
            <person name="Caccamo M."/>
            <person name="Churcher C."/>
            <person name="Scott C."/>
            <person name="Barrett J.C."/>
            <person name="Koch R."/>
            <person name="Rauch G.J."/>
            <person name="White S."/>
            <person name="Chow W."/>
            <person name="Kilian B."/>
            <person name="Quintais L.T."/>
            <person name="Guerra-Assuncao J.A."/>
            <person name="Zhou Y."/>
            <person name="Gu Y."/>
            <person name="Yen J."/>
            <person name="Vogel J.H."/>
            <person name="Eyre T."/>
            <person name="Redmond S."/>
            <person name="Banerjee R."/>
            <person name="Chi J."/>
            <person name="Fu B."/>
            <person name="Langley E."/>
            <person name="Maguire S.F."/>
            <person name="Laird G.K."/>
            <person name="Lloyd D."/>
            <person name="Kenyon E."/>
            <person name="Donaldson S."/>
            <person name="Sehra H."/>
            <person name="Almeida-King J."/>
            <person name="Loveland J."/>
            <person name="Trevanion S."/>
            <person name="Jones M."/>
            <person name="Quail M."/>
            <person name="Willey D."/>
            <person name="Hunt A."/>
            <person name="Burton J."/>
            <person name="Sims S."/>
            <person name="McLay K."/>
            <person name="Plumb B."/>
            <person name="Davis J."/>
            <person name="Clee C."/>
            <person name="Oliver K."/>
            <person name="Clark R."/>
            <person name="Riddle C."/>
            <person name="Elliot D."/>
            <person name="Threadgold G."/>
            <person name="Harden G."/>
            <person name="Ware D."/>
            <person name="Begum S."/>
            <person name="Mortimore B."/>
            <person name="Kerry G."/>
            <person name="Heath P."/>
            <person name="Phillimore B."/>
            <person name="Tracey A."/>
            <person name="Corby N."/>
            <person name="Dunn M."/>
            <person name="Johnson C."/>
            <person name="Wood J."/>
            <person name="Clark S."/>
            <person name="Pelan S."/>
            <person name="Griffiths G."/>
            <person name="Smith M."/>
            <person name="Glithero R."/>
            <person name="Howden P."/>
            <person name="Barker N."/>
            <person name="Lloyd C."/>
            <person name="Stevens C."/>
            <person name="Harley J."/>
            <person name="Holt K."/>
            <person name="Panagiotidis G."/>
            <person name="Lovell J."/>
            <person name="Beasley H."/>
            <person name="Henderson C."/>
            <person name="Gordon D."/>
            <person name="Auger K."/>
            <person name="Wright D."/>
            <person name="Collins J."/>
            <person name="Raisen C."/>
            <person name="Dyer L."/>
            <person name="Leung K."/>
            <person name="Robertson L."/>
            <person name="Ambridge K."/>
            <person name="Leongamornlert D."/>
            <person name="McGuire S."/>
            <person name="Gilderthorp R."/>
            <person name="Griffiths C."/>
            <person name="Manthravadi D."/>
            <person name="Nichol S."/>
            <person name="Barker G."/>
            <person name="Whitehead S."/>
            <person name="Kay M."/>
            <person name="Brown J."/>
            <person name="Murnane C."/>
            <person name="Gray E."/>
            <person name="Humphries M."/>
            <person name="Sycamore N."/>
            <person name="Barker D."/>
            <person name="Saunders D."/>
            <person name="Wallis J."/>
            <person name="Babbage A."/>
            <person name="Hammond S."/>
            <person name="Mashreghi-Mohammadi M."/>
            <person name="Barr L."/>
            <person name="Martin S."/>
            <person name="Wray P."/>
            <person name="Ellington A."/>
            <person name="Matthews N."/>
            <person name="Ellwood M."/>
            <person name="Woodmansey R."/>
            <person name="Clark G."/>
            <person name="Cooper J."/>
            <person name="Tromans A."/>
            <person name="Grafham D."/>
            <person name="Skuce C."/>
            <person name="Pandian R."/>
            <person name="Andrews R."/>
            <person name="Harrison E."/>
            <person name="Kimberley A."/>
            <person name="Garnett J."/>
            <person name="Fosker N."/>
            <person name="Hall R."/>
            <person name="Garner P."/>
            <person name="Kelly D."/>
            <person name="Bird C."/>
            <person name="Palmer S."/>
            <person name="Gehring I."/>
            <person name="Berger A."/>
            <person name="Dooley C.M."/>
            <person name="Ersan-Urun Z."/>
            <person name="Eser C."/>
            <person name="Geiger H."/>
            <person name="Geisler M."/>
            <person name="Karotki L."/>
            <person name="Kirn A."/>
            <person name="Konantz J."/>
            <person name="Konantz M."/>
            <person name="Oberlander M."/>
            <person name="Rudolph-Geiger S."/>
            <person name="Teucke M."/>
            <person name="Lanz C."/>
            <person name="Raddatz G."/>
            <person name="Osoegawa K."/>
            <person name="Zhu B."/>
            <person name="Rapp A."/>
            <person name="Widaa S."/>
            <person name="Langford C."/>
            <person name="Yang F."/>
            <person name="Schuster S.C."/>
            <person name="Carter N.P."/>
            <person name="Harrow J."/>
            <person name="Ning Z."/>
            <person name="Herrero J."/>
            <person name="Searle S.M."/>
            <person name="Enright A."/>
            <person name="Geisler R."/>
            <person name="Plasterk R.H."/>
            <person name="Lee C."/>
            <person name="Westerfield M."/>
            <person name="de Jong P.J."/>
            <person name="Zon L.I."/>
            <person name="Postlethwait J.H."/>
            <person name="Nusslein-Volhard C."/>
            <person name="Hubbard T.J."/>
            <person name="Roest Crollius H."/>
            <person name="Rogers J."/>
            <person name="Stemple D.L."/>
        </authorList>
    </citation>
    <scope>NUCLEOTIDE SEQUENCE [LARGE SCALE GENOMIC DNA]</scope>
    <source>
        <strain>Tuebingen</strain>
    </source>
</reference>
<reference key="2">
    <citation type="submission" date="2006-05" db="EMBL/GenBank/DDBJ databases">
        <authorList>
            <consortium name="NIH - Zebrafish Gene Collection (ZGC) project"/>
        </authorList>
    </citation>
    <scope>NUCLEOTIDE SEQUENCE [LARGE SCALE MRNA]</scope>
    <source>
        <tissue>Embryo</tissue>
        <tissue>Ovary</tissue>
    </source>
</reference>
<organism>
    <name type="scientific">Danio rerio</name>
    <name type="common">Zebrafish</name>
    <name type="synonym">Brachydanio rerio</name>
    <dbReference type="NCBI Taxonomy" id="7955"/>
    <lineage>
        <taxon>Eukaryota</taxon>
        <taxon>Metazoa</taxon>
        <taxon>Chordata</taxon>
        <taxon>Craniata</taxon>
        <taxon>Vertebrata</taxon>
        <taxon>Euteleostomi</taxon>
        <taxon>Actinopterygii</taxon>
        <taxon>Neopterygii</taxon>
        <taxon>Teleostei</taxon>
        <taxon>Ostariophysi</taxon>
        <taxon>Cypriniformes</taxon>
        <taxon>Danionidae</taxon>
        <taxon>Danioninae</taxon>
        <taxon>Danio</taxon>
    </lineage>
</organism>
<feature type="chain" id="PRO_0000314803" description="Protein zwilch homolog">
    <location>
        <begin position="1"/>
        <end position="583"/>
    </location>
</feature>
<feature type="sequence conflict" description="In Ref. 2; AAH95837." evidence="2" ref="2">
    <original>I</original>
    <variation>V</variation>
    <location>
        <position position="499"/>
    </location>
</feature>
<comment type="function">
    <text evidence="1">Essential component of the mitotic checkpoint, which prevents cells from prematurely exiting mitosis. Required for the assembly of the dynein-dynactin and mad1-mad2 complexes onto kinetochores (By similarity).</text>
</comment>
<comment type="subunit">
    <text evidence="1">Component of the RZZ complex composed of kntc1/rod, zw10 and zwilch.</text>
</comment>
<comment type="subcellular location">
    <subcellularLocation>
        <location evidence="1">Chromosome</location>
        <location evidence="1">Centromere</location>
        <location evidence="1">Kinetochore</location>
    </subcellularLocation>
</comment>
<comment type="similarity">
    <text evidence="2">Belongs to the ZWILCH family.</text>
</comment>
<comment type="sequence caution" evidence="2">
    <conflict type="erroneous initiation">
        <sequence resource="EMBL-CDS" id="AAH95837"/>
    </conflict>
</comment>
<comment type="sequence caution" evidence="2">
    <conflict type="erroneous initiation">
        <sequence resource="EMBL-CDS" id="AAI16507"/>
    </conflict>
</comment>
<comment type="sequence caution" evidence="2">
    <conflict type="erroneous initiation">
        <sequence resource="EMBL-CDS" id="AAI17615"/>
    </conflict>
</comment>
<accession>A5WWB6</accession>
<accession>Q1JQ30</accession>
<accession>Q501W8</accession>
<keyword id="KW-0131">Cell cycle</keyword>
<keyword id="KW-0132">Cell division</keyword>
<keyword id="KW-0137">Centromere</keyword>
<keyword id="KW-0158">Chromosome</keyword>
<keyword id="KW-0995">Kinetochore</keyword>
<keyword id="KW-0498">Mitosis</keyword>
<keyword id="KW-1185">Reference proteome</keyword>
<sequence length="583" mass="66078">MGSKIVSDANAFVKFLKLCQDESKDNCTYMDDVSVLLVKKEQLLHDIIGEKNQPIFICEKAQTKYEPEATETSADTSDVEDVLFKVEQDPGPQPLSIMKARQLLSWYTMAHNPNMSRLKAPENLHPLWVRCDKSDPCATAWLGVEITYSGNKTSGVKLYTVCCKGPTGDETAFTTLDELKQEHQNRHHTSAVSTKGYAQYNLFCSLTEESLMFESQSSVIASLTWNHVEKMLECPPLSSKATLNIKVAVGDIRSPLYQTYREMEFLLALAGGLRTGEIEWLEPVETQSAVDLTRALIEELENLAHGVPGHSAKASEKQKAKPDAAFSSMVIERGDLDFTEQLWEKMRKSVTSYQDITECMKIVVKAVKLGKIKPWIHKDSNSTLSKLILQSYQQQIDSVPLTGLAPANMLLELGLDKIRKDFINYLVGKELTTLNYLSYYLDTEVDLQEQVVRVRKLHHLLEILGTCSTFLSLPHERLFLFTQSCLQYYKTSNYDEDHIFQLQIKPALISYFYEKEQPFSWAVEVSSGQGSKEVKTSLYLSDKPLVDHIHLDLDVSLNESVNGDSEKMFYYRTMVSCSLINFI</sequence>